<keyword id="KW-0479">Metal-binding</keyword>
<keyword id="KW-0560">Oxidoreductase</keyword>
<keyword id="KW-0862">Zinc</keyword>
<accession>A1V4U8</accession>
<evidence type="ECO:0000255" key="1">
    <source>
        <dbReference type="HAMAP-Rule" id="MF_01400"/>
    </source>
</evidence>
<evidence type="ECO:0000255" key="2">
    <source>
        <dbReference type="PROSITE-ProRule" id="PRU01126"/>
    </source>
</evidence>
<organism>
    <name type="scientific">Burkholderia mallei (strain SAVP1)</name>
    <dbReference type="NCBI Taxonomy" id="320388"/>
    <lineage>
        <taxon>Bacteria</taxon>
        <taxon>Pseudomonadati</taxon>
        <taxon>Pseudomonadota</taxon>
        <taxon>Betaproteobacteria</taxon>
        <taxon>Burkholderiales</taxon>
        <taxon>Burkholderiaceae</taxon>
        <taxon>Burkholderia</taxon>
        <taxon>pseudomallei group</taxon>
    </lineage>
</organism>
<comment type="catalytic activity">
    <reaction evidence="1">
        <text>L-methionyl-[protein] + [thioredoxin]-disulfide + H2O = L-methionyl-(R)-S-oxide-[protein] + [thioredoxin]-dithiol</text>
        <dbReference type="Rhea" id="RHEA:24164"/>
        <dbReference type="Rhea" id="RHEA-COMP:10698"/>
        <dbReference type="Rhea" id="RHEA-COMP:10700"/>
        <dbReference type="Rhea" id="RHEA-COMP:12313"/>
        <dbReference type="Rhea" id="RHEA-COMP:12314"/>
        <dbReference type="ChEBI" id="CHEBI:15377"/>
        <dbReference type="ChEBI" id="CHEBI:16044"/>
        <dbReference type="ChEBI" id="CHEBI:29950"/>
        <dbReference type="ChEBI" id="CHEBI:45764"/>
        <dbReference type="ChEBI" id="CHEBI:50058"/>
        <dbReference type="EC" id="1.8.4.12"/>
    </reaction>
</comment>
<comment type="cofactor">
    <cofactor evidence="1">
        <name>Zn(2+)</name>
        <dbReference type="ChEBI" id="CHEBI:29105"/>
    </cofactor>
    <text evidence="1">Binds 1 zinc ion per subunit. The zinc ion is important for the structural integrity of the protein.</text>
</comment>
<comment type="similarity">
    <text evidence="1">Belongs to the MsrB Met sulfoxide reductase family.</text>
</comment>
<protein>
    <recommendedName>
        <fullName evidence="1">Peptide methionine sulfoxide reductase MsrB</fullName>
        <ecNumber evidence="1">1.8.4.12</ecNumber>
    </recommendedName>
    <alternativeName>
        <fullName evidence="1">Peptide-methionine (R)-S-oxide reductase</fullName>
    </alternativeName>
</protein>
<proteinExistence type="inferred from homology"/>
<sequence length="143" mass="16171">MSGDRDDPRYPYPKDDAELRRRLTPMQYEVTQHAATEPPFTGEYTDTEDAGIYHCVVCGTALFESGAKFHSGCGWPSYFKPIDGEVIDEKMDYTHGMTRVEVRCNQCGAHLGHVFEDGPRDKTGLRYCINSAALNFEAKPERK</sequence>
<reference key="1">
    <citation type="journal article" date="2010" name="Genome Biol. Evol.">
        <title>Continuing evolution of Burkholderia mallei through genome reduction and large-scale rearrangements.</title>
        <authorList>
            <person name="Losada L."/>
            <person name="Ronning C.M."/>
            <person name="DeShazer D."/>
            <person name="Woods D."/>
            <person name="Fedorova N."/>
            <person name="Kim H.S."/>
            <person name="Shabalina S.A."/>
            <person name="Pearson T.R."/>
            <person name="Brinkac L."/>
            <person name="Tan P."/>
            <person name="Nandi T."/>
            <person name="Crabtree J."/>
            <person name="Badger J."/>
            <person name="Beckstrom-Sternberg S."/>
            <person name="Saqib M."/>
            <person name="Schutzer S.E."/>
            <person name="Keim P."/>
            <person name="Nierman W.C."/>
        </authorList>
    </citation>
    <scope>NUCLEOTIDE SEQUENCE [LARGE SCALE GENOMIC DNA]</scope>
    <source>
        <strain>SAVP1</strain>
    </source>
</reference>
<dbReference type="EC" id="1.8.4.12" evidence="1"/>
<dbReference type="EMBL" id="CP000526">
    <property type="protein sequence ID" value="ABM51569.1"/>
    <property type="molecule type" value="Genomic_DNA"/>
</dbReference>
<dbReference type="RefSeq" id="WP_004193880.1">
    <property type="nucleotide sequence ID" value="NC_008785.1"/>
</dbReference>
<dbReference type="SMR" id="A1V4U8"/>
<dbReference type="GeneID" id="92979175"/>
<dbReference type="KEGG" id="bmv:BMASAVP1_A1932"/>
<dbReference type="HOGENOM" id="CLU_031040_8_5_4"/>
<dbReference type="GO" id="GO:0005737">
    <property type="term" value="C:cytoplasm"/>
    <property type="evidence" value="ECO:0007669"/>
    <property type="project" value="TreeGrafter"/>
</dbReference>
<dbReference type="GO" id="GO:0033743">
    <property type="term" value="F:peptide-methionine (R)-S-oxide reductase activity"/>
    <property type="evidence" value="ECO:0007669"/>
    <property type="project" value="UniProtKB-UniRule"/>
</dbReference>
<dbReference type="GO" id="GO:0008270">
    <property type="term" value="F:zinc ion binding"/>
    <property type="evidence" value="ECO:0007669"/>
    <property type="project" value="UniProtKB-UniRule"/>
</dbReference>
<dbReference type="GO" id="GO:0030091">
    <property type="term" value="P:protein repair"/>
    <property type="evidence" value="ECO:0007669"/>
    <property type="project" value="InterPro"/>
</dbReference>
<dbReference type="GO" id="GO:0006979">
    <property type="term" value="P:response to oxidative stress"/>
    <property type="evidence" value="ECO:0007669"/>
    <property type="project" value="InterPro"/>
</dbReference>
<dbReference type="FunFam" id="2.170.150.20:FF:000003">
    <property type="entry name" value="Peptide methionine sulfoxide reductase MsrB"/>
    <property type="match status" value="1"/>
</dbReference>
<dbReference type="Gene3D" id="2.170.150.20">
    <property type="entry name" value="Peptide methionine sulfoxide reductase"/>
    <property type="match status" value="1"/>
</dbReference>
<dbReference type="HAMAP" id="MF_01400">
    <property type="entry name" value="MsrB"/>
    <property type="match status" value="1"/>
</dbReference>
<dbReference type="InterPro" id="IPR028427">
    <property type="entry name" value="Met_Sox_Rdtase_MsrB"/>
</dbReference>
<dbReference type="InterPro" id="IPR002579">
    <property type="entry name" value="Met_Sox_Rdtase_MsrB_dom"/>
</dbReference>
<dbReference type="InterPro" id="IPR011057">
    <property type="entry name" value="Mss4-like_sf"/>
</dbReference>
<dbReference type="NCBIfam" id="TIGR00357">
    <property type="entry name" value="peptide-methionine (R)-S-oxide reductase MsrB"/>
    <property type="match status" value="1"/>
</dbReference>
<dbReference type="PANTHER" id="PTHR10173">
    <property type="entry name" value="METHIONINE SULFOXIDE REDUCTASE"/>
    <property type="match status" value="1"/>
</dbReference>
<dbReference type="PANTHER" id="PTHR10173:SF52">
    <property type="entry name" value="METHIONINE-R-SULFOXIDE REDUCTASE B1"/>
    <property type="match status" value="1"/>
</dbReference>
<dbReference type="Pfam" id="PF01641">
    <property type="entry name" value="SelR"/>
    <property type="match status" value="1"/>
</dbReference>
<dbReference type="SUPFAM" id="SSF51316">
    <property type="entry name" value="Mss4-like"/>
    <property type="match status" value="1"/>
</dbReference>
<dbReference type="PROSITE" id="PS51790">
    <property type="entry name" value="MSRB"/>
    <property type="match status" value="1"/>
</dbReference>
<feature type="chain" id="PRO_1000145359" description="Peptide methionine sulfoxide reductase MsrB">
    <location>
        <begin position="1"/>
        <end position="143"/>
    </location>
</feature>
<feature type="domain" description="MsrB" evidence="2">
    <location>
        <begin position="16"/>
        <end position="139"/>
    </location>
</feature>
<feature type="active site" description="Nucleophile" evidence="2">
    <location>
        <position position="128"/>
    </location>
</feature>
<feature type="binding site" evidence="2">
    <location>
        <position position="55"/>
    </location>
    <ligand>
        <name>Zn(2+)</name>
        <dbReference type="ChEBI" id="CHEBI:29105"/>
    </ligand>
</feature>
<feature type="binding site" evidence="2">
    <location>
        <position position="58"/>
    </location>
    <ligand>
        <name>Zn(2+)</name>
        <dbReference type="ChEBI" id="CHEBI:29105"/>
    </ligand>
</feature>
<feature type="binding site" evidence="2">
    <location>
        <position position="104"/>
    </location>
    <ligand>
        <name>Zn(2+)</name>
        <dbReference type="ChEBI" id="CHEBI:29105"/>
    </ligand>
</feature>
<feature type="binding site" evidence="2">
    <location>
        <position position="107"/>
    </location>
    <ligand>
        <name>Zn(2+)</name>
        <dbReference type="ChEBI" id="CHEBI:29105"/>
    </ligand>
</feature>
<name>MSRB_BURMS</name>
<gene>
    <name evidence="1" type="primary">msrB</name>
    <name type="ordered locus">BMASAVP1_A1932</name>
</gene>